<gene>
    <name evidence="1" type="primary">rlmF</name>
    <name type="ordered locus">Shew_3741</name>
</gene>
<organism>
    <name type="scientific">Shewanella loihica (strain ATCC BAA-1088 / PV-4)</name>
    <dbReference type="NCBI Taxonomy" id="323850"/>
    <lineage>
        <taxon>Bacteria</taxon>
        <taxon>Pseudomonadati</taxon>
        <taxon>Pseudomonadota</taxon>
        <taxon>Gammaproteobacteria</taxon>
        <taxon>Alteromonadales</taxon>
        <taxon>Shewanellaceae</taxon>
        <taxon>Shewanella</taxon>
    </lineage>
</organism>
<sequence>MTPSRKPARPGAKKVVSQEPSAKASRPKPSSQSKSKAQPKAKPESKPQAKSQAKPQAKSKPVEGKSQGASKGLHPRNLHGQGYDFDALMDTTPELKPFVRPNPYGNLSIDFADPRAVKLLNLALLRLHYGLSYWDIPEGFLCPPIPGRVDYLHYLADLLAESTPASKGGKRKLPNVTRAPKGERVVALDIGTGANGIYPLLGHQVYGWRFVASDIDPVSLKNVERIIANNPQLAGKLSLRLQSDSKQIFTGIIRAEDRFDLTLCNPPFHASLAEASRGSERKLKNLAANKRAKGHEVAKSKEKLNFGGQKAELWCEGGEQAFLGQMIRESQKFGSQCLWFTSLVSKKENLKPCYRLLEQVGAKRVETLEMAQGNKLTRVLAWTFLTPEQHSLWGLYRV</sequence>
<name>RLMF_SHELP</name>
<keyword id="KW-0963">Cytoplasm</keyword>
<keyword id="KW-0489">Methyltransferase</keyword>
<keyword id="KW-1185">Reference proteome</keyword>
<keyword id="KW-0698">rRNA processing</keyword>
<keyword id="KW-0949">S-adenosyl-L-methionine</keyword>
<keyword id="KW-0808">Transferase</keyword>
<feature type="chain" id="PRO_0000349957" description="Ribosomal RNA large subunit methyltransferase F">
    <location>
        <begin position="1"/>
        <end position="398"/>
    </location>
</feature>
<feature type="region of interest" description="Disordered" evidence="2">
    <location>
        <begin position="1"/>
        <end position="85"/>
    </location>
</feature>
<feature type="compositionally biased region" description="Basic residues" evidence="2">
    <location>
        <begin position="1"/>
        <end position="12"/>
    </location>
</feature>
<feature type="compositionally biased region" description="Low complexity" evidence="2">
    <location>
        <begin position="20"/>
        <end position="40"/>
    </location>
</feature>
<feature type="compositionally biased region" description="Low complexity" evidence="2">
    <location>
        <begin position="48"/>
        <end position="59"/>
    </location>
</feature>
<protein>
    <recommendedName>
        <fullName evidence="1">Ribosomal RNA large subunit methyltransferase F</fullName>
        <ecNumber evidence="1">2.1.1.181</ecNumber>
    </recommendedName>
    <alternativeName>
        <fullName evidence="1">23S rRNA mA1618 methyltransferase</fullName>
    </alternativeName>
    <alternativeName>
        <fullName evidence="1">rRNA adenine N-6-methyltransferase</fullName>
    </alternativeName>
</protein>
<proteinExistence type="inferred from homology"/>
<comment type="function">
    <text evidence="1">Specifically methylates the adenine in position 1618 of 23S rRNA.</text>
</comment>
<comment type="catalytic activity">
    <reaction evidence="1">
        <text>adenosine(1618) in 23S rRNA + S-adenosyl-L-methionine = N(6)-methyladenosine(1618) in 23S rRNA + S-adenosyl-L-homocysteine + H(+)</text>
        <dbReference type="Rhea" id="RHEA:16497"/>
        <dbReference type="Rhea" id="RHEA-COMP:10229"/>
        <dbReference type="Rhea" id="RHEA-COMP:10231"/>
        <dbReference type="ChEBI" id="CHEBI:15378"/>
        <dbReference type="ChEBI" id="CHEBI:57856"/>
        <dbReference type="ChEBI" id="CHEBI:59789"/>
        <dbReference type="ChEBI" id="CHEBI:74411"/>
        <dbReference type="ChEBI" id="CHEBI:74449"/>
        <dbReference type="EC" id="2.1.1.181"/>
    </reaction>
</comment>
<comment type="subcellular location">
    <subcellularLocation>
        <location evidence="1">Cytoplasm</location>
    </subcellularLocation>
</comment>
<comment type="similarity">
    <text evidence="1">Belongs to the methyltransferase superfamily. METTL16/RlmF family.</text>
</comment>
<evidence type="ECO:0000255" key="1">
    <source>
        <dbReference type="HAMAP-Rule" id="MF_01848"/>
    </source>
</evidence>
<evidence type="ECO:0000256" key="2">
    <source>
        <dbReference type="SAM" id="MobiDB-lite"/>
    </source>
</evidence>
<dbReference type="EC" id="2.1.1.181" evidence="1"/>
<dbReference type="EMBL" id="CP000606">
    <property type="protein sequence ID" value="ABO25607.1"/>
    <property type="molecule type" value="Genomic_DNA"/>
</dbReference>
<dbReference type="RefSeq" id="WP_011867535.1">
    <property type="nucleotide sequence ID" value="NC_009092.1"/>
</dbReference>
<dbReference type="SMR" id="A3QJF9"/>
<dbReference type="STRING" id="323850.Shew_3741"/>
<dbReference type="KEGG" id="slo:Shew_3741"/>
<dbReference type="eggNOG" id="COG3129">
    <property type="taxonomic scope" value="Bacteria"/>
</dbReference>
<dbReference type="HOGENOM" id="CLU_027534_3_0_6"/>
<dbReference type="OrthoDB" id="1115728at2"/>
<dbReference type="Proteomes" id="UP000001558">
    <property type="component" value="Chromosome"/>
</dbReference>
<dbReference type="GO" id="GO:0005737">
    <property type="term" value="C:cytoplasm"/>
    <property type="evidence" value="ECO:0007669"/>
    <property type="project" value="UniProtKB-SubCell"/>
</dbReference>
<dbReference type="GO" id="GO:0052907">
    <property type="term" value="F:23S rRNA (adenine(1618)-N(6))-methyltransferase activity"/>
    <property type="evidence" value="ECO:0007669"/>
    <property type="project" value="UniProtKB-EC"/>
</dbReference>
<dbReference type="GO" id="GO:0070475">
    <property type="term" value="P:rRNA base methylation"/>
    <property type="evidence" value="ECO:0007669"/>
    <property type="project" value="TreeGrafter"/>
</dbReference>
<dbReference type="CDD" id="cd02440">
    <property type="entry name" value="AdoMet_MTases"/>
    <property type="match status" value="1"/>
</dbReference>
<dbReference type="Gene3D" id="3.40.50.150">
    <property type="entry name" value="Vaccinia Virus protein VP39"/>
    <property type="match status" value="1"/>
</dbReference>
<dbReference type="HAMAP" id="MF_01848">
    <property type="entry name" value="23SrRNA_methyltr_F"/>
    <property type="match status" value="1"/>
</dbReference>
<dbReference type="InterPro" id="IPR010286">
    <property type="entry name" value="METTL16/RlmF"/>
</dbReference>
<dbReference type="InterPro" id="IPR016909">
    <property type="entry name" value="rRNA_lsu_MeTfrase_F"/>
</dbReference>
<dbReference type="InterPro" id="IPR029063">
    <property type="entry name" value="SAM-dependent_MTases_sf"/>
</dbReference>
<dbReference type="NCBIfam" id="NF008725">
    <property type="entry name" value="PRK11727.1"/>
    <property type="match status" value="1"/>
</dbReference>
<dbReference type="PANTHER" id="PTHR13393:SF0">
    <property type="entry name" value="RNA N6-ADENOSINE-METHYLTRANSFERASE METTL16"/>
    <property type="match status" value="1"/>
</dbReference>
<dbReference type="PANTHER" id="PTHR13393">
    <property type="entry name" value="SAM-DEPENDENT METHYLTRANSFERASE"/>
    <property type="match status" value="1"/>
</dbReference>
<dbReference type="Pfam" id="PF05971">
    <property type="entry name" value="Methyltransf_10"/>
    <property type="match status" value="1"/>
</dbReference>
<dbReference type="PIRSF" id="PIRSF029038">
    <property type="entry name" value="Mtase_YbiN_prd"/>
    <property type="match status" value="1"/>
</dbReference>
<dbReference type="SUPFAM" id="SSF53335">
    <property type="entry name" value="S-adenosyl-L-methionine-dependent methyltransferases"/>
    <property type="match status" value="1"/>
</dbReference>
<accession>A3QJF9</accession>
<reference key="1">
    <citation type="submission" date="2007-03" db="EMBL/GenBank/DDBJ databases">
        <title>Complete sequence of Shewanella loihica PV-4.</title>
        <authorList>
            <consortium name="US DOE Joint Genome Institute"/>
            <person name="Copeland A."/>
            <person name="Lucas S."/>
            <person name="Lapidus A."/>
            <person name="Barry K."/>
            <person name="Detter J.C."/>
            <person name="Glavina del Rio T."/>
            <person name="Hammon N."/>
            <person name="Israni S."/>
            <person name="Dalin E."/>
            <person name="Tice H."/>
            <person name="Pitluck S."/>
            <person name="Chain P."/>
            <person name="Malfatti S."/>
            <person name="Shin M."/>
            <person name="Vergez L."/>
            <person name="Schmutz J."/>
            <person name="Larimer F."/>
            <person name="Land M."/>
            <person name="Hauser L."/>
            <person name="Kyrpides N."/>
            <person name="Mikhailova N."/>
            <person name="Romine M.F."/>
            <person name="Serres G."/>
            <person name="Fredrickson J."/>
            <person name="Tiedje J."/>
            <person name="Richardson P."/>
        </authorList>
    </citation>
    <scope>NUCLEOTIDE SEQUENCE [LARGE SCALE GENOMIC DNA]</scope>
    <source>
        <strain>ATCC BAA-1088 / PV-4</strain>
    </source>
</reference>